<gene>
    <name evidence="1" type="primary">pgk</name>
    <name type="ordered locus">GM21_1883</name>
</gene>
<proteinExistence type="inferred from homology"/>
<reference key="1">
    <citation type="submission" date="2009-07" db="EMBL/GenBank/DDBJ databases">
        <title>Complete sequence of Geobacter sp. M21.</title>
        <authorList>
            <consortium name="US DOE Joint Genome Institute"/>
            <person name="Lucas S."/>
            <person name="Copeland A."/>
            <person name="Lapidus A."/>
            <person name="Glavina del Rio T."/>
            <person name="Dalin E."/>
            <person name="Tice H."/>
            <person name="Bruce D."/>
            <person name="Goodwin L."/>
            <person name="Pitluck S."/>
            <person name="Saunders E."/>
            <person name="Brettin T."/>
            <person name="Detter J.C."/>
            <person name="Han C."/>
            <person name="Larimer F."/>
            <person name="Land M."/>
            <person name="Hauser L."/>
            <person name="Kyrpides N."/>
            <person name="Ovchinnikova G."/>
            <person name="Lovley D."/>
        </authorList>
    </citation>
    <scope>NUCLEOTIDE SEQUENCE [LARGE SCALE GENOMIC DNA]</scope>
    <source>
        <strain>M21</strain>
    </source>
</reference>
<dbReference type="EC" id="2.7.2.3" evidence="1"/>
<dbReference type="EMBL" id="CP001661">
    <property type="protein sequence ID" value="ACT17936.1"/>
    <property type="molecule type" value="Genomic_DNA"/>
</dbReference>
<dbReference type="SMR" id="C6E770"/>
<dbReference type="STRING" id="443144.GM21_1883"/>
<dbReference type="KEGG" id="gem:GM21_1883"/>
<dbReference type="eggNOG" id="COG0126">
    <property type="taxonomic scope" value="Bacteria"/>
</dbReference>
<dbReference type="HOGENOM" id="CLU_025427_0_2_7"/>
<dbReference type="OrthoDB" id="9808460at2"/>
<dbReference type="UniPathway" id="UPA00109">
    <property type="reaction ID" value="UER00185"/>
</dbReference>
<dbReference type="GO" id="GO:0005829">
    <property type="term" value="C:cytosol"/>
    <property type="evidence" value="ECO:0007669"/>
    <property type="project" value="TreeGrafter"/>
</dbReference>
<dbReference type="GO" id="GO:0043531">
    <property type="term" value="F:ADP binding"/>
    <property type="evidence" value="ECO:0007669"/>
    <property type="project" value="TreeGrafter"/>
</dbReference>
<dbReference type="GO" id="GO:0005524">
    <property type="term" value="F:ATP binding"/>
    <property type="evidence" value="ECO:0007669"/>
    <property type="project" value="UniProtKB-KW"/>
</dbReference>
<dbReference type="GO" id="GO:0004618">
    <property type="term" value="F:phosphoglycerate kinase activity"/>
    <property type="evidence" value="ECO:0007669"/>
    <property type="project" value="UniProtKB-UniRule"/>
</dbReference>
<dbReference type="GO" id="GO:0006094">
    <property type="term" value="P:gluconeogenesis"/>
    <property type="evidence" value="ECO:0007669"/>
    <property type="project" value="TreeGrafter"/>
</dbReference>
<dbReference type="GO" id="GO:0006096">
    <property type="term" value="P:glycolytic process"/>
    <property type="evidence" value="ECO:0007669"/>
    <property type="project" value="UniProtKB-UniRule"/>
</dbReference>
<dbReference type="CDD" id="cd00318">
    <property type="entry name" value="Phosphoglycerate_kinase"/>
    <property type="match status" value="1"/>
</dbReference>
<dbReference type="FunFam" id="3.40.50.1260:FF:000003">
    <property type="entry name" value="Phosphoglycerate kinase"/>
    <property type="match status" value="1"/>
</dbReference>
<dbReference type="FunFam" id="3.40.50.1260:FF:000006">
    <property type="entry name" value="Phosphoglycerate kinase"/>
    <property type="match status" value="1"/>
</dbReference>
<dbReference type="Gene3D" id="3.40.50.1260">
    <property type="entry name" value="Phosphoglycerate kinase, N-terminal domain"/>
    <property type="match status" value="2"/>
</dbReference>
<dbReference type="HAMAP" id="MF_00145">
    <property type="entry name" value="Phosphoglyc_kinase"/>
    <property type="match status" value="1"/>
</dbReference>
<dbReference type="InterPro" id="IPR001576">
    <property type="entry name" value="Phosphoglycerate_kinase"/>
</dbReference>
<dbReference type="InterPro" id="IPR015824">
    <property type="entry name" value="Phosphoglycerate_kinase_N"/>
</dbReference>
<dbReference type="InterPro" id="IPR036043">
    <property type="entry name" value="Phosphoglycerate_kinase_sf"/>
</dbReference>
<dbReference type="PANTHER" id="PTHR11406">
    <property type="entry name" value="PHOSPHOGLYCERATE KINASE"/>
    <property type="match status" value="1"/>
</dbReference>
<dbReference type="PANTHER" id="PTHR11406:SF23">
    <property type="entry name" value="PHOSPHOGLYCERATE KINASE 1, CHLOROPLASTIC-RELATED"/>
    <property type="match status" value="1"/>
</dbReference>
<dbReference type="Pfam" id="PF00162">
    <property type="entry name" value="PGK"/>
    <property type="match status" value="1"/>
</dbReference>
<dbReference type="PIRSF" id="PIRSF000724">
    <property type="entry name" value="Pgk"/>
    <property type="match status" value="1"/>
</dbReference>
<dbReference type="PRINTS" id="PR00477">
    <property type="entry name" value="PHGLYCKINASE"/>
</dbReference>
<dbReference type="SUPFAM" id="SSF53748">
    <property type="entry name" value="Phosphoglycerate kinase"/>
    <property type="match status" value="1"/>
</dbReference>
<sequence length="399" mass="43451">MSIRYIDEIENLSGKKLFMRVDFNVPLDDNQNITEDTRIRAVLPSINYALDQKAKIILASHLGRPKGERKEKYSMAPAAKRLSRLLGKEVKLASDCIGDEVKAMINAMQPGDVIMLENVRFYAGEEKNDADFAKALANDCDVYVNDAFAVSHRAHASVEAITNCFPVVAAGFLMKNEMNYFEKAMKNPIRPLVAILGGAKVSGKIEVLENLCDKVDKIIIGGGMAFTFLKGMGYNVGKSLVEDNLIDTAMKTYEKARAQGVKFYLPVDCVVADQFNPAAETKVCPIQEIPEGWMALDVGPATVTLFTEALQNAKTIVWNGPMGVFEMDAFSRGTFAMVSAVANSYALTIVGGGDTDVAVHRAGEYAKISYISTGGGAFLELLEGKKLPGIKVLEDKGHL</sequence>
<keyword id="KW-0067">ATP-binding</keyword>
<keyword id="KW-0963">Cytoplasm</keyword>
<keyword id="KW-0324">Glycolysis</keyword>
<keyword id="KW-0418">Kinase</keyword>
<keyword id="KW-0547">Nucleotide-binding</keyword>
<keyword id="KW-0808">Transferase</keyword>
<evidence type="ECO:0000255" key="1">
    <source>
        <dbReference type="HAMAP-Rule" id="MF_00145"/>
    </source>
</evidence>
<feature type="chain" id="PRO_1000203335" description="Phosphoglycerate kinase">
    <location>
        <begin position="1"/>
        <end position="399"/>
    </location>
</feature>
<feature type="binding site" evidence="1">
    <location>
        <begin position="22"/>
        <end position="24"/>
    </location>
    <ligand>
        <name>substrate</name>
    </ligand>
</feature>
<feature type="binding site" evidence="1">
    <location>
        <position position="38"/>
    </location>
    <ligand>
        <name>substrate</name>
    </ligand>
</feature>
<feature type="binding site" evidence="1">
    <location>
        <begin position="61"/>
        <end position="64"/>
    </location>
    <ligand>
        <name>substrate</name>
    </ligand>
</feature>
<feature type="binding site" evidence="1">
    <location>
        <position position="120"/>
    </location>
    <ligand>
        <name>substrate</name>
    </ligand>
</feature>
<feature type="binding site" evidence="1">
    <location>
        <position position="153"/>
    </location>
    <ligand>
        <name>substrate</name>
    </ligand>
</feature>
<feature type="binding site" evidence="1">
    <location>
        <position position="204"/>
    </location>
    <ligand>
        <name>ATP</name>
        <dbReference type="ChEBI" id="CHEBI:30616"/>
    </ligand>
</feature>
<feature type="binding site" evidence="1">
    <location>
        <position position="326"/>
    </location>
    <ligand>
        <name>ATP</name>
        <dbReference type="ChEBI" id="CHEBI:30616"/>
    </ligand>
</feature>
<feature type="binding site" evidence="1">
    <location>
        <begin position="352"/>
        <end position="355"/>
    </location>
    <ligand>
        <name>ATP</name>
        <dbReference type="ChEBI" id="CHEBI:30616"/>
    </ligand>
</feature>
<organism>
    <name type="scientific">Geobacter sp. (strain M21)</name>
    <dbReference type="NCBI Taxonomy" id="443144"/>
    <lineage>
        <taxon>Bacteria</taxon>
        <taxon>Pseudomonadati</taxon>
        <taxon>Thermodesulfobacteriota</taxon>
        <taxon>Desulfuromonadia</taxon>
        <taxon>Geobacterales</taxon>
        <taxon>Geobacteraceae</taxon>
        <taxon>Geobacter</taxon>
    </lineage>
</organism>
<protein>
    <recommendedName>
        <fullName evidence="1">Phosphoglycerate kinase</fullName>
        <ecNumber evidence="1">2.7.2.3</ecNumber>
    </recommendedName>
</protein>
<accession>C6E770</accession>
<comment type="catalytic activity">
    <reaction evidence="1">
        <text>(2R)-3-phosphoglycerate + ATP = (2R)-3-phospho-glyceroyl phosphate + ADP</text>
        <dbReference type="Rhea" id="RHEA:14801"/>
        <dbReference type="ChEBI" id="CHEBI:30616"/>
        <dbReference type="ChEBI" id="CHEBI:57604"/>
        <dbReference type="ChEBI" id="CHEBI:58272"/>
        <dbReference type="ChEBI" id="CHEBI:456216"/>
        <dbReference type="EC" id="2.7.2.3"/>
    </reaction>
</comment>
<comment type="pathway">
    <text evidence="1">Carbohydrate degradation; glycolysis; pyruvate from D-glyceraldehyde 3-phosphate: step 2/5.</text>
</comment>
<comment type="subunit">
    <text evidence="1">Monomer.</text>
</comment>
<comment type="subcellular location">
    <subcellularLocation>
        <location evidence="1">Cytoplasm</location>
    </subcellularLocation>
</comment>
<comment type="similarity">
    <text evidence="1">Belongs to the phosphoglycerate kinase family.</text>
</comment>
<name>PGK_GEOSM</name>